<protein>
    <recommendedName>
        <fullName evidence="1">3-dehydroquinate synthase</fullName>
        <shortName evidence="1">DHQS</shortName>
        <ecNumber evidence="1">4.2.3.4</ecNumber>
    </recommendedName>
</protein>
<organism>
    <name type="scientific">Cutibacterium acnes (strain DSM 16379 / KPA171202)</name>
    <name type="common">Propionibacterium acnes</name>
    <dbReference type="NCBI Taxonomy" id="267747"/>
    <lineage>
        <taxon>Bacteria</taxon>
        <taxon>Bacillati</taxon>
        <taxon>Actinomycetota</taxon>
        <taxon>Actinomycetes</taxon>
        <taxon>Propionibacteriales</taxon>
        <taxon>Propionibacteriaceae</taxon>
        <taxon>Cutibacterium</taxon>
    </lineage>
</organism>
<dbReference type="EC" id="4.2.3.4" evidence="1"/>
<dbReference type="EMBL" id="AE017283">
    <property type="protein sequence ID" value="AAT82933.1"/>
    <property type="molecule type" value="Genomic_DNA"/>
</dbReference>
<dbReference type="RefSeq" id="WP_002516868.1">
    <property type="nucleotide sequence ID" value="NZ_CP025935.1"/>
</dbReference>
<dbReference type="SMR" id="Q6A8I2"/>
<dbReference type="EnsemblBacteria" id="AAT82933">
    <property type="protein sequence ID" value="AAT82933"/>
    <property type="gene ID" value="PPA1184"/>
</dbReference>
<dbReference type="KEGG" id="pac:PPA1184"/>
<dbReference type="eggNOG" id="COG0337">
    <property type="taxonomic scope" value="Bacteria"/>
</dbReference>
<dbReference type="HOGENOM" id="CLU_001201_0_3_11"/>
<dbReference type="UniPathway" id="UPA00053">
    <property type="reaction ID" value="UER00085"/>
</dbReference>
<dbReference type="Proteomes" id="UP000000603">
    <property type="component" value="Chromosome"/>
</dbReference>
<dbReference type="GO" id="GO:0005737">
    <property type="term" value="C:cytoplasm"/>
    <property type="evidence" value="ECO:0007669"/>
    <property type="project" value="UniProtKB-SubCell"/>
</dbReference>
<dbReference type="GO" id="GO:0003856">
    <property type="term" value="F:3-dehydroquinate synthase activity"/>
    <property type="evidence" value="ECO:0007669"/>
    <property type="project" value="UniProtKB-UniRule"/>
</dbReference>
<dbReference type="GO" id="GO:0046872">
    <property type="term" value="F:metal ion binding"/>
    <property type="evidence" value="ECO:0007669"/>
    <property type="project" value="UniProtKB-KW"/>
</dbReference>
<dbReference type="GO" id="GO:0000166">
    <property type="term" value="F:nucleotide binding"/>
    <property type="evidence" value="ECO:0007669"/>
    <property type="project" value="UniProtKB-KW"/>
</dbReference>
<dbReference type="GO" id="GO:0008652">
    <property type="term" value="P:amino acid biosynthetic process"/>
    <property type="evidence" value="ECO:0007669"/>
    <property type="project" value="UniProtKB-KW"/>
</dbReference>
<dbReference type="GO" id="GO:0009073">
    <property type="term" value="P:aromatic amino acid family biosynthetic process"/>
    <property type="evidence" value="ECO:0007669"/>
    <property type="project" value="UniProtKB-KW"/>
</dbReference>
<dbReference type="GO" id="GO:0009423">
    <property type="term" value="P:chorismate biosynthetic process"/>
    <property type="evidence" value="ECO:0007669"/>
    <property type="project" value="UniProtKB-UniRule"/>
</dbReference>
<dbReference type="CDD" id="cd08195">
    <property type="entry name" value="DHQS"/>
    <property type="match status" value="1"/>
</dbReference>
<dbReference type="Gene3D" id="3.40.50.1970">
    <property type="match status" value="1"/>
</dbReference>
<dbReference type="Gene3D" id="1.20.1090.10">
    <property type="entry name" value="Dehydroquinate synthase-like - alpha domain"/>
    <property type="match status" value="1"/>
</dbReference>
<dbReference type="HAMAP" id="MF_00110">
    <property type="entry name" value="DHQ_synthase"/>
    <property type="match status" value="1"/>
</dbReference>
<dbReference type="InterPro" id="IPR050071">
    <property type="entry name" value="Dehydroquinate_synthase"/>
</dbReference>
<dbReference type="InterPro" id="IPR016037">
    <property type="entry name" value="DHQ_synth_AroB"/>
</dbReference>
<dbReference type="InterPro" id="IPR030963">
    <property type="entry name" value="DHQ_synth_fam"/>
</dbReference>
<dbReference type="InterPro" id="IPR030960">
    <property type="entry name" value="DHQS/DOIS_N"/>
</dbReference>
<dbReference type="InterPro" id="IPR056179">
    <property type="entry name" value="DHQS_C"/>
</dbReference>
<dbReference type="PANTHER" id="PTHR43622">
    <property type="entry name" value="3-DEHYDROQUINATE SYNTHASE"/>
    <property type="match status" value="1"/>
</dbReference>
<dbReference type="PANTHER" id="PTHR43622:SF7">
    <property type="entry name" value="3-DEHYDROQUINATE SYNTHASE, CHLOROPLASTIC"/>
    <property type="match status" value="1"/>
</dbReference>
<dbReference type="Pfam" id="PF01761">
    <property type="entry name" value="DHQ_synthase"/>
    <property type="match status" value="1"/>
</dbReference>
<dbReference type="Pfam" id="PF24621">
    <property type="entry name" value="DHQS_C"/>
    <property type="match status" value="1"/>
</dbReference>
<dbReference type="PIRSF" id="PIRSF001455">
    <property type="entry name" value="DHQ_synth"/>
    <property type="match status" value="1"/>
</dbReference>
<dbReference type="SUPFAM" id="SSF56796">
    <property type="entry name" value="Dehydroquinate synthase-like"/>
    <property type="match status" value="1"/>
</dbReference>
<reference key="1">
    <citation type="journal article" date="2004" name="Science">
        <title>The complete genome sequence of Propionibacterium acnes, a commensal of human skin.</title>
        <authorList>
            <person name="Brueggemann H."/>
            <person name="Henne A."/>
            <person name="Hoster F."/>
            <person name="Liesegang H."/>
            <person name="Wiezer A."/>
            <person name="Strittmatter A."/>
            <person name="Hujer S."/>
            <person name="Duerre P."/>
            <person name="Gottschalk G."/>
        </authorList>
    </citation>
    <scope>NUCLEOTIDE SEQUENCE [LARGE SCALE GENOMIC DNA]</scope>
    <source>
        <strain>DSM 16379 / KPA171202</strain>
    </source>
</reference>
<name>AROB_CUTAK</name>
<sequence>MNLVEVATTKPYRVRIGSGAVHELAGLVAGRRAAVVCPQTLVHLVPRFGIDDLVVIEVPDAEAAKTPEVLVNGWRRLAEANMTRGDIIVGFGGGATTDVAGFLAATWMRGIDVIHVPTTVLAMADAAIGGKTGVNIPAGKNLVGAFHEPIGVLCDTELLTTLPAREVRSGLAEIVKCGFIKDPVILDVISNHPRLALDVTSQTFVEVLTRAITVKAGVVSADLHERTSSREEVGRERLNYGHTLAHAIEAHKHFTWRHGEADAVGMVFAAELSHRYLGLSDEVVARTRTILSEIGLPVTCDEIKWADLRKTMNVDKKTRVDPQTGRQVLRFVGIHKPGQVAMIVDPDEAALAECYDRCSAR</sequence>
<feature type="chain" id="PRO_0000231112" description="3-dehydroquinate synthase">
    <location>
        <begin position="1"/>
        <end position="361"/>
    </location>
</feature>
<feature type="binding site" evidence="1">
    <location>
        <begin position="60"/>
        <end position="65"/>
    </location>
    <ligand>
        <name>NAD(+)</name>
        <dbReference type="ChEBI" id="CHEBI:57540"/>
    </ligand>
</feature>
<feature type="binding site" evidence="1">
    <location>
        <begin position="94"/>
        <end position="98"/>
    </location>
    <ligand>
        <name>NAD(+)</name>
        <dbReference type="ChEBI" id="CHEBI:57540"/>
    </ligand>
</feature>
<feature type="binding site" evidence="1">
    <location>
        <begin position="118"/>
        <end position="119"/>
    </location>
    <ligand>
        <name>NAD(+)</name>
        <dbReference type="ChEBI" id="CHEBI:57540"/>
    </ligand>
</feature>
<feature type="binding site" evidence="1">
    <location>
        <position position="131"/>
    </location>
    <ligand>
        <name>NAD(+)</name>
        <dbReference type="ChEBI" id="CHEBI:57540"/>
    </ligand>
</feature>
<feature type="binding site" evidence="1">
    <location>
        <position position="140"/>
    </location>
    <ligand>
        <name>NAD(+)</name>
        <dbReference type="ChEBI" id="CHEBI:57540"/>
    </ligand>
</feature>
<feature type="binding site" evidence="1">
    <location>
        <position position="173"/>
    </location>
    <ligand>
        <name>Zn(2+)</name>
        <dbReference type="ChEBI" id="CHEBI:29105"/>
    </ligand>
</feature>
<feature type="binding site" evidence="1">
    <location>
        <position position="242"/>
    </location>
    <ligand>
        <name>Zn(2+)</name>
        <dbReference type="ChEBI" id="CHEBI:29105"/>
    </ligand>
</feature>
<feature type="binding site" evidence="1">
    <location>
        <position position="258"/>
    </location>
    <ligand>
        <name>Zn(2+)</name>
        <dbReference type="ChEBI" id="CHEBI:29105"/>
    </ligand>
</feature>
<gene>
    <name evidence="1" type="primary">aroB</name>
    <name type="ordered locus">PPA1184</name>
</gene>
<proteinExistence type="inferred from homology"/>
<evidence type="ECO:0000255" key="1">
    <source>
        <dbReference type="HAMAP-Rule" id="MF_00110"/>
    </source>
</evidence>
<comment type="function">
    <text evidence="1">Catalyzes the conversion of 3-deoxy-D-arabino-heptulosonate 7-phosphate (DAHP) to dehydroquinate (DHQ).</text>
</comment>
<comment type="catalytic activity">
    <reaction evidence="1">
        <text>7-phospho-2-dehydro-3-deoxy-D-arabino-heptonate = 3-dehydroquinate + phosphate</text>
        <dbReference type="Rhea" id="RHEA:21968"/>
        <dbReference type="ChEBI" id="CHEBI:32364"/>
        <dbReference type="ChEBI" id="CHEBI:43474"/>
        <dbReference type="ChEBI" id="CHEBI:58394"/>
        <dbReference type="EC" id="4.2.3.4"/>
    </reaction>
</comment>
<comment type="cofactor">
    <cofactor evidence="1">
        <name>Co(2+)</name>
        <dbReference type="ChEBI" id="CHEBI:48828"/>
    </cofactor>
    <cofactor evidence="1">
        <name>Zn(2+)</name>
        <dbReference type="ChEBI" id="CHEBI:29105"/>
    </cofactor>
    <text evidence="1">Binds 1 divalent metal cation per subunit. Can use either Co(2+) or Zn(2+).</text>
</comment>
<comment type="cofactor">
    <cofactor evidence="1">
        <name>NAD(+)</name>
        <dbReference type="ChEBI" id="CHEBI:57540"/>
    </cofactor>
</comment>
<comment type="pathway">
    <text evidence="1">Metabolic intermediate biosynthesis; chorismate biosynthesis; chorismate from D-erythrose 4-phosphate and phosphoenolpyruvate: step 2/7.</text>
</comment>
<comment type="subcellular location">
    <subcellularLocation>
        <location evidence="1">Cytoplasm</location>
    </subcellularLocation>
</comment>
<comment type="similarity">
    <text evidence="1">Belongs to the sugar phosphate cyclases superfamily. Dehydroquinate synthase family.</text>
</comment>
<accession>Q6A8I2</accession>
<keyword id="KW-0028">Amino-acid biosynthesis</keyword>
<keyword id="KW-0057">Aromatic amino acid biosynthesis</keyword>
<keyword id="KW-0170">Cobalt</keyword>
<keyword id="KW-0963">Cytoplasm</keyword>
<keyword id="KW-0456">Lyase</keyword>
<keyword id="KW-0479">Metal-binding</keyword>
<keyword id="KW-0520">NAD</keyword>
<keyword id="KW-0547">Nucleotide-binding</keyword>
<keyword id="KW-0862">Zinc</keyword>